<protein>
    <recommendedName>
        <fullName>Bifunctional protein glk</fullName>
    </recommendedName>
    <domain>
        <recommendedName>
            <fullName>Glucokinase</fullName>
            <ecNumber>2.7.1.2</ecNumber>
        </recommendedName>
        <alternativeName>
            <fullName>Glucose kinase</fullName>
        </alternativeName>
    </domain>
    <domain>
        <recommendedName>
            <fullName>Putative HTH-type transcriptional regulator</fullName>
        </recommendedName>
    </domain>
</protein>
<name>GLK_BURTA</name>
<organism>
    <name type="scientific">Burkholderia thailandensis (strain ATCC 700388 / DSM 13276 / CCUG 48851 / CIP 106301 / E264)</name>
    <dbReference type="NCBI Taxonomy" id="271848"/>
    <lineage>
        <taxon>Bacteria</taxon>
        <taxon>Pseudomonadati</taxon>
        <taxon>Pseudomonadota</taxon>
        <taxon>Betaproteobacteria</taxon>
        <taxon>Burkholderiales</taxon>
        <taxon>Burkholderiaceae</taxon>
        <taxon>Burkholderia</taxon>
        <taxon>pseudomallei group</taxon>
    </lineage>
</organism>
<comment type="catalytic activity">
    <reaction>
        <text>D-glucose + ATP = D-glucose 6-phosphate + ADP + H(+)</text>
        <dbReference type="Rhea" id="RHEA:17825"/>
        <dbReference type="ChEBI" id="CHEBI:4167"/>
        <dbReference type="ChEBI" id="CHEBI:15378"/>
        <dbReference type="ChEBI" id="CHEBI:30616"/>
        <dbReference type="ChEBI" id="CHEBI:61548"/>
        <dbReference type="ChEBI" id="CHEBI:456216"/>
        <dbReference type="EC" id="2.7.1.2"/>
    </reaction>
</comment>
<comment type="subcellular location">
    <subcellularLocation>
        <location evidence="4">Membrane</location>
        <topology evidence="4">Single-pass membrane protein</topology>
    </subcellularLocation>
</comment>
<comment type="similarity">
    <text evidence="4">In the N-terminal section; belongs to the bacterial glucokinase family.</text>
</comment>
<dbReference type="EC" id="2.7.1.2"/>
<dbReference type="EMBL" id="CP000086">
    <property type="protein sequence ID" value="ABC37839.1"/>
    <property type="molecule type" value="Genomic_DNA"/>
</dbReference>
<dbReference type="RefSeq" id="WP_011402098.1">
    <property type="nucleotide sequence ID" value="NC_007651.1"/>
</dbReference>
<dbReference type="SMR" id="Q2SYA5"/>
<dbReference type="GeneID" id="45121286"/>
<dbReference type="KEGG" id="bte:BTH_I1550"/>
<dbReference type="HOGENOM" id="CLU_016801_0_0_4"/>
<dbReference type="Proteomes" id="UP000001930">
    <property type="component" value="Chromosome I"/>
</dbReference>
<dbReference type="GO" id="GO:0005829">
    <property type="term" value="C:cytosol"/>
    <property type="evidence" value="ECO:0007669"/>
    <property type="project" value="TreeGrafter"/>
</dbReference>
<dbReference type="GO" id="GO:0016020">
    <property type="term" value="C:membrane"/>
    <property type="evidence" value="ECO:0007669"/>
    <property type="project" value="UniProtKB-SubCell"/>
</dbReference>
<dbReference type="GO" id="GO:0005524">
    <property type="term" value="F:ATP binding"/>
    <property type="evidence" value="ECO:0007669"/>
    <property type="project" value="UniProtKB-UniRule"/>
</dbReference>
<dbReference type="GO" id="GO:0005536">
    <property type="term" value="F:D-glucose binding"/>
    <property type="evidence" value="ECO:0007669"/>
    <property type="project" value="InterPro"/>
</dbReference>
<dbReference type="GO" id="GO:0003677">
    <property type="term" value="F:DNA binding"/>
    <property type="evidence" value="ECO:0007669"/>
    <property type="project" value="UniProtKB-KW"/>
</dbReference>
<dbReference type="GO" id="GO:0003700">
    <property type="term" value="F:DNA-binding transcription factor activity"/>
    <property type="evidence" value="ECO:0007669"/>
    <property type="project" value="InterPro"/>
</dbReference>
<dbReference type="GO" id="GO:0004340">
    <property type="term" value="F:glucokinase activity"/>
    <property type="evidence" value="ECO:0007669"/>
    <property type="project" value="UniProtKB-UniRule"/>
</dbReference>
<dbReference type="GO" id="GO:0006096">
    <property type="term" value="P:glycolytic process"/>
    <property type="evidence" value="ECO:0007669"/>
    <property type="project" value="UniProtKB-UniRule"/>
</dbReference>
<dbReference type="CDD" id="cd24008">
    <property type="entry name" value="ASKHA_NBD_GLK"/>
    <property type="match status" value="1"/>
</dbReference>
<dbReference type="CDD" id="cd05013">
    <property type="entry name" value="SIS_RpiR"/>
    <property type="match status" value="1"/>
</dbReference>
<dbReference type="Gene3D" id="3.30.420.40">
    <property type="match status" value="1"/>
</dbReference>
<dbReference type="Gene3D" id="3.40.367.20">
    <property type="match status" value="1"/>
</dbReference>
<dbReference type="Gene3D" id="3.40.50.10490">
    <property type="entry name" value="Glucose-6-phosphate isomerase like protein, domain 1"/>
    <property type="match status" value="1"/>
</dbReference>
<dbReference type="Gene3D" id="1.10.10.10">
    <property type="entry name" value="Winged helix-like DNA-binding domain superfamily/Winged helix DNA-binding domain"/>
    <property type="match status" value="1"/>
</dbReference>
<dbReference type="HAMAP" id="MF_00524">
    <property type="entry name" value="Glucokinase"/>
    <property type="match status" value="1"/>
</dbReference>
<dbReference type="InterPro" id="IPR043129">
    <property type="entry name" value="ATPase_NBD"/>
</dbReference>
<dbReference type="InterPro" id="IPR050201">
    <property type="entry name" value="Bacterial_glucokinase"/>
</dbReference>
<dbReference type="InterPro" id="IPR003836">
    <property type="entry name" value="Glucokinase"/>
</dbReference>
<dbReference type="InterPro" id="IPR009057">
    <property type="entry name" value="Homeodomain-like_sf"/>
</dbReference>
<dbReference type="InterPro" id="IPR000281">
    <property type="entry name" value="HTH_RpiR"/>
</dbReference>
<dbReference type="InterPro" id="IPR035472">
    <property type="entry name" value="RpiR-like_SIS"/>
</dbReference>
<dbReference type="InterPro" id="IPR001347">
    <property type="entry name" value="SIS_dom"/>
</dbReference>
<dbReference type="InterPro" id="IPR046348">
    <property type="entry name" value="SIS_dom_sf"/>
</dbReference>
<dbReference type="InterPro" id="IPR036388">
    <property type="entry name" value="WH-like_DNA-bd_sf"/>
</dbReference>
<dbReference type="NCBIfam" id="TIGR00749">
    <property type="entry name" value="glk"/>
    <property type="match status" value="1"/>
</dbReference>
<dbReference type="NCBIfam" id="NF001416">
    <property type="entry name" value="PRK00292.1-3"/>
    <property type="match status" value="1"/>
</dbReference>
<dbReference type="NCBIfam" id="NF010701">
    <property type="entry name" value="PRK14101.1"/>
    <property type="match status" value="1"/>
</dbReference>
<dbReference type="PANTHER" id="PTHR47690">
    <property type="entry name" value="GLUCOKINASE"/>
    <property type="match status" value="1"/>
</dbReference>
<dbReference type="PANTHER" id="PTHR47690:SF1">
    <property type="entry name" value="GLUCOKINASE"/>
    <property type="match status" value="1"/>
</dbReference>
<dbReference type="Pfam" id="PF02685">
    <property type="entry name" value="Glucokinase"/>
    <property type="match status" value="1"/>
</dbReference>
<dbReference type="Pfam" id="PF01418">
    <property type="entry name" value="HTH_6"/>
    <property type="match status" value="1"/>
</dbReference>
<dbReference type="Pfam" id="PF01380">
    <property type="entry name" value="SIS"/>
    <property type="match status" value="1"/>
</dbReference>
<dbReference type="SUPFAM" id="SSF53067">
    <property type="entry name" value="Actin-like ATPase domain"/>
    <property type="match status" value="1"/>
</dbReference>
<dbReference type="SUPFAM" id="SSF46689">
    <property type="entry name" value="Homeodomain-like"/>
    <property type="match status" value="1"/>
</dbReference>
<dbReference type="SUPFAM" id="SSF53697">
    <property type="entry name" value="SIS domain"/>
    <property type="match status" value="1"/>
</dbReference>
<dbReference type="PROSITE" id="PS00356">
    <property type="entry name" value="HTH_LACI_1"/>
    <property type="match status" value="1"/>
</dbReference>
<dbReference type="PROSITE" id="PS51071">
    <property type="entry name" value="HTH_RPIR"/>
    <property type="match status" value="1"/>
</dbReference>
<dbReference type="PROSITE" id="PS51464">
    <property type="entry name" value="SIS"/>
    <property type="match status" value="1"/>
</dbReference>
<accession>Q2SYA5</accession>
<gene>
    <name type="primary">glk</name>
    <name type="ordered locus">BTH_I1550</name>
</gene>
<feature type="chain" id="PRO_0000268801" description="Bifunctional protein glk">
    <location>
        <begin position="1"/>
        <end position="641"/>
    </location>
</feature>
<feature type="transmembrane region" description="Helical" evidence="2">
    <location>
        <begin position="576"/>
        <end position="596"/>
    </location>
</feature>
<feature type="domain" description="HTH rpiR-type">
    <location>
        <begin position="341"/>
        <end position="417"/>
    </location>
</feature>
<feature type="domain" description="SIS">
    <location>
        <begin position="461"/>
        <end position="600"/>
    </location>
</feature>
<feature type="DNA-binding region" description="H-T-H motif" evidence="1">
    <location>
        <begin position="377"/>
        <end position="396"/>
    </location>
</feature>
<feature type="region of interest" description="Glucokinase">
    <location>
        <begin position="1"/>
        <end position="340"/>
    </location>
</feature>
<feature type="region of interest" description="Disordered" evidence="3">
    <location>
        <begin position="1"/>
        <end position="21"/>
    </location>
</feature>
<feature type="region of interest" description="Putative HTH-type transcriptional regulator">
    <location>
        <begin position="341"/>
        <end position="641"/>
    </location>
</feature>
<feature type="binding site" evidence="2">
    <location>
        <begin position="23"/>
        <end position="28"/>
    </location>
    <ligand>
        <name>ATP</name>
        <dbReference type="ChEBI" id="CHEBI:30616"/>
    </ligand>
</feature>
<reference key="1">
    <citation type="journal article" date="2005" name="BMC Genomics">
        <title>Bacterial genome adaptation to niches: divergence of the potential virulence genes in three Burkholderia species of different survival strategies.</title>
        <authorList>
            <person name="Kim H.S."/>
            <person name="Schell M.A."/>
            <person name="Yu Y."/>
            <person name="Ulrich R.L."/>
            <person name="Sarria S.H."/>
            <person name="Nierman W.C."/>
            <person name="DeShazer D."/>
        </authorList>
    </citation>
    <scope>NUCLEOTIDE SEQUENCE [LARGE SCALE GENOMIC DNA]</scope>
    <source>
        <strain>ATCC 700388 / DSM 13276 / CCUG 48851 / CIP 106301 / E264</strain>
    </source>
</reference>
<sequence>MSTGAQTKAAEASQHADGPRLLADVGGTNARFALETGPGEITQIRVYPGAEYPTLTDAIRRYLKDVKIGRVNHAAIAIANPVDGDQVRMTNHNWSFSIEATRRALGFDTLLVVNDFTALAMALPGLTDAQRVQIGAGARRQNSVIGLMGPGTGLGVSGLIPADDRWIALGSEGGHATFAPMDEREDLVLQYARRKYPHVSFERVCAGPGMEIIYRALAARDKKRIAANVVTADIVERAHAGDALALEAVECFCGILGTFAGNLAVTLGALGGIYIGGGVVPKLGELFMRSPFRARFEAKGRFEAYLANIPTYLITAEYPAFLGVSAILAEQLSNRTGGASSAVFERIRQMRDALTPAERRVADLALNHPRSIINDPIVDIARKADVSQPTVIRFCRSLGCQGLSDFKLKLATGLTGTIPMSHSQVHLGDTATDFGAKVLDNTVSAILQLREHLNFEHVEQAIDILNNARRIEFYGLGNSNIVAQDAHYKFFRFGIPTIAYGDLYMQAASAALLGKGDVIVAVSKSGRAPELLRVLDVAMQAGAKVIAITSSNTPLAKRATVALETDHIEMRESQLSMISRILHLVMIDILAVGVAIRRASPNAELAEAMARAKARAGASAGDEAADVLDWLSHGAAPAAKE</sequence>
<keyword id="KW-0067">ATP-binding</keyword>
<keyword id="KW-0238">DNA-binding</keyword>
<keyword id="KW-0324">Glycolysis</keyword>
<keyword id="KW-0418">Kinase</keyword>
<keyword id="KW-0472">Membrane</keyword>
<keyword id="KW-0511">Multifunctional enzyme</keyword>
<keyword id="KW-0547">Nucleotide-binding</keyword>
<keyword id="KW-0804">Transcription</keyword>
<keyword id="KW-0805">Transcription regulation</keyword>
<keyword id="KW-0808">Transferase</keyword>
<keyword id="KW-0812">Transmembrane</keyword>
<keyword id="KW-1133">Transmembrane helix</keyword>
<evidence type="ECO:0000250" key="1"/>
<evidence type="ECO:0000255" key="2"/>
<evidence type="ECO:0000256" key="3">
    <source>
        <dbReference type="SAM" id="MobiDB-lite"/>
    </source>
</evidence>
<evidence type="ECO:0000305" key="4"/>
<proteinExistence type="inferred from homology"/>